<feature type="chain" id="PRO_1000192883" description="Photosystem II reaction center protein Y">
    <location>
        <begin position="1"/>
        <end position="41"/>
    </location>
</feature>
<feature type="transmembrane region" description="Helical" evidence="1">
    <location>
        <begin position="5"/>
        <end position="23"/>
    </location>
</feature>
<protein>
    <recommendedName>
        <fullName evidence="1">Photosystem II reaction center protein Y</fullName>
    </recommendedName>
</protein>
<comment type="function">
    <text evidence="1">Loosely associated component of the core of photosystem II (PSII), it is not always seen in crystals. PSII is a light-driven water plastoquinone oxidoreductase, using light energy to abstract electrons from H(2)O, generating a proton gradient subsequently used for ATP formation.</text>
</comment>
<comment type="subunit">
    <text evidence="1">PSII is composed of 1 copy each of membrane proteins PsbA, PsbB, PsbC, PsbD, PsbE, PsbF, PsbH, PsbI, PsbJ, PsbK, PsbL, PsbM, PsbT, PsbX, PsbY, PsbZ, Psb30/Ycf12, peripheral proteins PsbO, CyanoQ (PsbQ), PsbU, PsbV and a large number of cofactors. It forms dimeric complexes.</text>
</comment>
<comment type="subcellular location">
    <subcellularLocation>
        <location evidence="1">Cellular thylakoid membrane</location>
        <topology evidence="1">Single-pass membrane protein</topology>
    </subcellularLocation>
</comment>
<comment type="similarity">
    <text evidence="1">Belongs to the PsbY family.</text>
</comment>
<accession>B7KIS7</accession>
<gene>
    <name evidence="1" type="primary">psbY</name>
    <name type="ordered locus">PCC7424_2342</name>
</gene>
<evidence type="ECO:0000255" key="1">
    <source>
        <dbReference type="HAMAP-Rule" id="MF_00717"/>
    </source>
</evidence>
<sequence length="41" mass="4580">MDWRVLIVLAPVIIAGSWALFNIGAAAIRQVQEFLNRDKLA</sequence>
<name>PSBY_GLOC7</name>
<dbReference type="EMBL" id="CP001291">
    <property type="protein sequence ID" value="ACK70763.1"/>
    <property type="molecule type" value="Genomic_DNA"/>
</dbReference>
<dbReference type="RefSeq" id="WP_015954367.1">
    <property type="nucleotide sequence ID" value="NC_011729.1"/>
</dbReference>
<dbReference type="SMR" id="B7KIS7"/>
<dbReference type="STRING" id="65393.PCC7424_2342"/>
<dbReference type="KEGG" id="cyc:PCC7424_2342"/>
<dbReference type="eggNOG" id="ENOG5032HC4">
    <property type="taxonomic scope" value="Bacteria"/>
</dbReference>
<dbReference type="HOGENOM" id="CLU_218393_1_0_3"/>
<dbReference type="OrthoDB" id="561045at2"/>
<dbReference type="Proteomes" id="UP000002384">
    <property type="component" value="Chromosome"/>
</dbReference>
<dbReference type="GO" id="GO:0009523">
    <property type="term" value="C:photosystem II"/>
    <property type="evidence" value="ECO:0007669"/>
    <property type="project" value="UniProtKB-KW"/>
</dbReference>
<dbReference type="GO" id="GO:0031676">
    <property type="term" value="C:plasma membrane-derived thylakoid membrane"/>
    <property type="evidence" value="ECO:0007669"/>
    <property type="project" value="UniProtKB-SubCell"/>
</dbReference>
<dbReference type="GO" id="GO:0030145">
    <property type="term" value="F:manganese ion binding"/>
    <property type="evidence" value="ECO:0007669"/>
    <property type="project" value="InterPro"/>
</dbReference>
<dbReference type="GO" id="GO:0015979">
    <property type="term" value="P:photosynthesis"/>
    <property type="evidence" value="ECO:0007669"/>
    <property type="project" value="UniProtKB-UniRule"/>
</dbReference>
<dbReference type="HAMAP" id="MF_00717">
    <property type="entry name" value="PSII_PsbY"/>
    <property type="match status" value="1"/>
</dbReference>
<dbReference type="InterPro" id="IPR009388">
    <property type="entry name" value="PSII_PsbY"/>
</dbReference>
<dbReference type="NCBIfam" id="NF009711">
    <property type="entry name" value="PRK13240.1"/>
    <property type="match status" value="1"/>
</dbReference>
<dbReference type="Pfam" id="PF06298">
    <property type="entry name" value="PsbY"/>
    <property type="match status" value="1"/>
</dbReference>
<organism>
    <name type="scientific">Gloeothece citriformis (strain PCC 7424)</name>
    <name type="common">Cyanothece sp. (strain PCC 7424)</name>
    <dbReference type="NCBI Taxonomy" id="65393"/>
    <lineage>
        <taxon>Bacteria</taxon>
        <taxon>Bacillati</taxon>
        <taxon>Cyanobacteriota</taxon>
        <taxon>Cyanophyceae</taxon>
        <taxon>Oscillatoriophycideae</taxon>
        <taxon>Chroococcales</taxon>
        <taxon>Aphanothecaceae</taxon>
        <taxon>Gloeothece</taxon>
        <taxon>Gloeothece citriformis</taxon>
    </lineage>
</organism>
<reference key="1">
    <citation type="journal article" date="2011" name="MBio">
        <title>Novel metabolic attributes of the genus Cyanothece, comprising a group of unicellular nitrogen-fixing Cyanobacteria.</title>
        <authorList>
            <person name="Bandyopadhyay A."/>
            <person name="Elvitigala T."/>
            <person name="Welsh E."/>
            <person name="Stockel J."/>
            <person name="Liberton M."/>
            <person name="Min H."/>
            <person name="Sherman L.A."/>
            <person name="Pakrasi H.B."/>
        </authorList>
    </citation>
    <scope>NUCLEOTIDE SEQUENCE [LARGE SCALE GENOMIC DNA]</scope>
    <source>
        <strain>PCC 7424</strain>
    </source>
</reference>
<proteinExistence type="inferred from homology"/>
<keyword id="KW-0472">Membrane</keyword>
<keyword id="KW-0602">Photosynthesis</keyword>
<keyword id="KW-0604">Photosystem II</keyword>
<keyword id="KW-1185">Reference proteome</keyword>
<keyword id="KW-0793">Thylakoid</keyword>
<keyword id="KW-0812">Transmembrane</keyword>
<keyword id="KW-1133">Transmembrane helix</keyword>